<keyword id="KW-0963">Cytoplasm</keyword>
<keyword id="KW-0324">Glycolysis</keyword>
<keyword id="KW-0456">Lyase</keyword>
<keyword id="KW-0704">Schiff base</keyword>
<comment type="catalytic activity">
    <reaction>
        <text>beta-D-fructose 1,6-bisphosphate = D-glyceraldehyde 3-phosphate + dihydroxyacetone phosphate</text>
        <dbReference type="Rhea" id="RHEA:14729"/>
        <dbReference type="ChEBI" id="CHEBI:32966"/>
        <dbReference type="ChEBI" id="CHEBI:57642"/>
        <dbReference type="ChEBI" id="CHEBI:59776"/>
        <dbReference type="EC" id="4.1.2.13"/>
    </reaction>
</comment>
<comment type="subcellular location">
    <subcellularLocation>
        <location evidence="2">Cytoplasm</location>
    </subcellularLocation>
</comment>
<comment type="similarity">
    <text evidence="2">Belongs to the DeoC/FbaB aldolase family. FbaB subfamily.</text>
</comment>
<dbReference type="EC" id="4.1.2.13"/>
<dbReference type="EMBL" id="AE001363">
    <property type="protein sequence ID" value="AAD18430.1"/>
    <property type="molecule type" value="Genomic_DNA"/>
</dbReference>
<dbReference type="EMBL" id="AE002161">
    <property type="protein sequence ID" value="AAF38310.1"/>
    <property type="molecule type" value="Genomic_DNA"/>
</dbReference>
<dbReference type="EMBL" id="BA000008">
    <property type="protein sequence ID" value="BAA98491.1"/>
    <property type="molecule type" value="Genomic_DNA"/>
</dbReference>
<dbReference type="EMBL" id="AE009440">
    <property type="protein sequence ID" value="AAP98222.1"/>
    <property type="molecule type" value="Genomic_DNA"/>
</dbReference>
<dbReference type="PIR" id="A86526">
    <property type="entry name" value="A86526"/>
</dbReference>
<dbReference type="PIR" id="C72097">
    <property type="entry name" value="C72097"/>
</dbReference>
<dbReference type="RefSeq" id="NP_224486.1">
    <property type="nucleotide sequence ID" value="NC_000922.1"/>
</dbReference>
<dbReference type="RefSeq" id="WP_010882929.1">
    <property type="nucleotide sequence ID" value="NZ_LN847257.1"/>
</dbReference>
<dbReference type="SMR" id="Q9Z8Q7"/>
<dbReference type="STRING" id="406984.CPK_ORF00790"/>
<dbReference type="GeneID" id="45050330"/>
<dbReference type="KEGG" id="cpa:CP_0477"/>
<dbReference type="KEGG" id="cpj:dhnA"/>
<dbReference type="KEGG" id="cpn:CPn_0281"/>
<dbReference type="KEGG" id="cpt:CpB0289"/>
<dbReference type="PATRIC" id="fig|115713.3.peg.315"/>
<dbReference type="eggNOG" id="COG1830">
    <property type="taxonomic scope" value="Bacteria"/>
</dbReference>
<dbReference type="HOGENOM" id="CLU_057069_0_0_0"/>
<dbReference type="OMA" id="RYQVLNC"/>
<dbReference type="OrthoDB" id="9769559at2"/>
<dbReference type="Proteomes" id="UP000000583">
    <property type="component" value="Chromosome"/>
</dbReference>
<dbReference type="Proteomes" id="UP000000801">
    <property type="component" value="Chromosome"/>
</dbReference>
<dbReference type="GO" id="GO:0005737">
    <property type="term" value="C:cytoplasm"/>
    <property type="evidence" value="ECO:0007669"/>
    <property type="project" value="UniProtKB-SubCell"/>
</dbReference>
<dbReference type="GO" id="GO:0004332">
    <property type="term" value="F:fructose-bisphosphate aldolase activity"/>
    <property type="evidence" value="ECO:0007669"/>
    <property type="project" value="UniProtKB-EC"/>
</dbReference>
<dbReference type="GO" id="GO:0006096">
    <property type="term" value="P:glycolytic process"/>
    <property type="evidence" value="ECO:0007669"/>
    <property type="project" value="UniProtKB-KW"/>
</dbReference>
<dbReference type="CDD" id="cd00958">
    <property type="entry name" value="DhnA"/>
    <property type="match status" value="1"/>
</dbReference>
<dbReference type="Gene3D" id="3.20.20.70">
    <property type="entry name" value="Aldolase class I"/>
    <property type="match status" value="1"/>
</dbReference>
<dbReference type="InterPro" id="IPR013785">
    <property type="entry name" value="Aldolase_TIM"/>
</dbReference>
<dbReference type="InterPro" id="IPR002915">
    <property type="entry name" value="DeoC/FbaB/LacD_aldolase"/>
</dbReference>
<dbReference type="InterPro" id="IPR050456">
    <property type="entry name" value="DeoC/FbaB_aldolase"/>
</dbReference>
<dbReference type="InterPro" id="IPR041720">
    <property type="entry name" value="FbaB-like"/>
</dbReference>
<dbReference type="NCBIfam" id="NF006705">
    <property type="entry name" value="PRK09250.1-2"/>
    <property type="match status" value="1"/>
</dbReference>
<dbReference type="NCBIfam" id="NF006707">
    <property type="entry name" value="PRK09250.1-4"/>
    <property type="match status" value="1"/>
</dbReference>
<dbReference type="PANTHER" id="PTHR47916">
    <property type="entry name" value="FRUCTOSE-BISPHOSPHATE ALDOLASE CLASS 1"/>
    <property type="match status" value="1"/>
</dbReference>
<dbReference type="PANTHER" id="PTHR47916:SF4">
    <property type="entry name" value="FRUCTOSE-BISPHOSPHATE ALDOLASE CLASS 1"/>
    <property type="match status" value="1"/>
</dbReference>
<dbReference type="Pfam" id="PF01791">
    <property type="entry name" value="DeoC"/>
    <property type="match status" value="1"/>
</dbReference>
<dbReference type="SMART" id="SM01133">
    <property type="entry name" value="DeoC"/>
    <property type="match status" value="1"/>
</dbReference>
<dbReference type="SUPFAM" id="SSF51569">
    <property type="entry name" value="Aldolase"/>
    <property type="match status" value="1"/>
</dbReference>
<gene>
    <name type="primary">fbaB</name>
    <name type="ordered locus">CPn_0281</name>
    <name type="ordered locus">CP_0477</name>
    <name type="ordered locus">CpB0289</name>
</gene>
<organism>
    <name type="scientific">Chlamydia pneumoniae</name>
    <name type="common">Chlamydophila pneumoniae</name>
    <dbReference type="NCBI Taxonomy" id="83558"/>
    <lineage>
        <taxon>Bacteria</taxon>
        <taxon>Pseudomonadati</taxon>
        <taxon>Chlamydiota</taxon>
        <taxon>Chlamydiia</taxon>
        <taxon>Chlamydiales</taxon>
        <taxon>Chlamydiaceae</taxon>
        <taxon>Chlamydia/Chlamydophila group</taxon>
        <taxon>Chlamydia</taxon>
    </lineage>
</organism>
<proteinExistence type="inferred from homology"/>
<feature type="chain" id="PRO_0000138942" description="Probable fructose-bisphosphate aldolase class 1">
    <location>
        <begin position="1"/>
        <end position="349"/>
    </location>
</feature>
<feature type="active site" description="Schiff-base intermediate with dihydroxyacetone-P" evidence="1">
    <location>
        <position position="237"/>
    </location>
</feature>
<accession>Q9Z8Q7</accession>
<accession>Q9JQ77</accession>
<name>ALF1_CHLPN</name>
<sequence>MLNIHDILGNDDENLLSYQCKHITKDKLTLPSHDFVDKVFGLSDRNNRVLRSLQTMFSHGRLANSGYLSILPVDQGIEHSAGASFAINPIYFDPENIVKLAIESGCSAVASTYGTLSLLSRKYAHKIPFMLKLNHNELLSYPTKYHQIFFTQVEAAYSMGAVAVGATVYFGSETSNEEIVAVSNAFAKARSLGLATVLWCYLRNPAFVANGVDYHTAADLTGQADHLGATLGADIVKQKLPTCQGGFKAINFGKTDERVYSELSSNHPIDLCRYQVLNSYCGKVGLINSGGPSGKNDFTEAARTAVINKRAGGMGLILGRKAFQRPLSEGIQLLNLVQDIYLDPNITIA</sequence>
<evidence type="ECO:0000250" key="1"/>
<evidence type="ECO:0000305" key="2"/>
<reference key="1">
    <citation type="journal article" date="1999" name="Nat. Genet.">
        <title>Comparative genomes of Chlamydia pneumoniae and C. trachomatis.</title>
        <authorList>
            <person name="Kalman S."/>
            <person name="Mitchell W.P."/>
            <person name="Marathe R."/>
            <person name="Lammel C.J."/>
            <person name="Fan J."/>
            <person name="Hyman R.W."/>
            <person name="Olinger L."/>
            <person name="Grimwood J."/>
            <person name="Davis R.W."/>
            <person name="Stephens R.S."/>
        </authorList>
    </citation>
    <scope>NUCLEOTIDE SEQUENCE [LARGE SCALE GENOMIC DNA]</scope>
    <source>
        <strain>CWL029</strain>
    </source>
</reference>
<reference key="2">
    <citation type="journal article" date="2000" name="Nucleic Acids Res.">
        <title>Genome sequences of Chlamydia trachomatis MoPn and Chlamydia pneumoniae AR39.</title>
        <authorList>
            <person name="Read T.D."/>
            <person name="Brunham R.C."/>
            <person name="Shen C."/>
            <person name="Gill S.R."/>
            <person name="Heidelberg J.F."/>
            <person name="White O."/>
            <person name="Hickey E.K."/>
            <person name="Peterson J.D."/>
            <person name="Utterback T.R."/>
            <person name="Berry K.J."/>
            <person name="Bass S."/>
            <person name="Linher K.D."/>
            <person name="Weidman J.F."/>
            <person name="Khouri H.M."/>
            <person name="Craven B."/>
            <person name="Bowman C."/>
            <person name="Dodson R.J."/>
            <person name="Gwinn M.L."/>
            <person name="Nelson W.C."/>
            <person name="DeBoy R.T."/>
            <person name="Kolonay J.F."/>
            <person name="McClarty G."/>
            <person name="Salzberg S.L."/>
            <person name="Eisen J.A."/>
            <person name="Fraser C.M."/>
        </authorList>
    </citation>
    <scope>NUCLEOTIDE SEQUENCE [LARGE SCALE GENOMIC DNA]</scope>
    <source>
        <strain>AR39</strain>
    </source>
</reference>
<reference key="3">
    <citation type="journal article" date="2000" name="Nucleic Acids Res.">
        <title>Comparison of whole genome sequences of Chlamydia pneumoniae J138 from Japan and CWL029 from USA.</title>
        <authorList>
            <person name="Shirai M."/>
            <person name="Hirakawa H."/>
            <person name="Kimoto M."/>
            <person name="Tabuchi M."/>
            <person name="Kishi F."/>
            <person name="Ouchi K."/>
            <person name="Shiba T."/>
            <person name="Ishii K."/>
            <person name="Hattori M."/>
            <person name="Kuhara S."/>
            <person name="Nakazawa T."/>
        </authorList>
    </citation>
    <scope>NUCLEOTIDE SEQUENCE [LARGE SCALE GENOMIC DNA]</scope>
    <source>
        <strain>J138</strain>
    </source>
</reference>
<reference key="4">
    <citation type="submission" date="2002-05" db="EMBL/GenBank/DDBJ databases">
        <title>The genome sequence of Chlamydia pneumoniae TW183 and comparison with other Chlamydia strains based on whole genome sequence analysis.</title>
        <authorList>
            <person name="Geng M.M."/>
            <person name="Schuhmacher A."/>
            <person name="Muehldorfer I."/>
            <person name="Bensch K.W."/>
            <person name="Schaefer K.P."/>
            <person name="Schneider S."/>
            <person name="Pohl T."/>
            <person name="Essig A."/>
            <person name="Marre R."/>
            <person name="Melchers K."/>
        </authorList>
    </citation>
    <scope>NUCLEOTIDE SEQUENCE [LARGE SCALE GENOMIC DNA]</scope>
    <source>
        <strain>TW-183</strain>
    </source>
</reference>
<protein>
    <recommendedName>
        <fullName>Probable fructose-bisphosphate aldolase class 1</fullName>
        <ecNumber>4.1.2.13</ecNumber>
    </recommendedName>
    <alternativeName>
        <fullName>Probable fructose-bisphosphate aldolase class I</fullName>
        <shortName>FBP aldolase</shortName>
    </alternativeName>
</protein>